<evidence type="ECO:0000250" key="1">
    <source>
        <dbReference type="UniProtKB" id="Q99J27"/>
    </source>
</evidence>
<evidence type="ECO:0000255" key="2"/>
<evidence type="ECO:0000256" key="3">
    <source>
        <dbReference type="SAM" id="MobiDB-lite"/>
    </source>
</evidence>
<evidence type="ECO:0000269" key="4">
    <source>
    </source>
</evidence>
<evidence type="ECO:0000269" key="5">
    <source>
    </source>
</evidence>
<evidence type="ECO:0000269" key="6">
    <source>
    </source>
</evidence>
<evidence type="ECO:0000269" key="7">
    <source>
    </source>
</evidence>
<evidence type="ECO:0000269" key="8">
    <source>
    </source>
</evidence>
<evidence type="ECO:0000269" key="9">
    <source>
    </source>
</evidence>
<evidence type="ECO:0000269" key="10">
    <source>
    </source>
</evidence>
<evidence type="ECO:0000303" key="11">
    <source>
    </source>
</evidence>
<evidence type="ECO:0000305" key="12"/>
<evidence type="ECO:0000312" key="13">
    <source>
        <dbReference type="HGNC" id="HGNC:95"/>
    </source>
</evidence>
<evidence type="ECO:0007744" key="14">
    <source>
    </source>
</evidence>
<proteinExistence type="evidence at protein level"/>
<gene>
    <name evidence="13" type="primary">SLC33A1</name>
    <name type="synonym">ACATN</name>
    <name type="synonym">AT1</name>
</gene>
<comment type="function">
    <text evidence="6 8 9 10">Acetyl-CoA transporter that mediates active acetyl-CoA import through the endoplasmic reticulum (ER) membrane into the ER lumen where specific ER-based acetyl-CoA:lysine acetyltransferases are responsible for the acetylation of ER-based protein substrates, such as BACE1 (PubMed:20826464, PubMed:24828632). Necessary for O-acetylation of gangliosides (PubMed:9096318).</text>
</comment>
<comment type="catalytic activity">
    <reaction evidence="6 8">
        <text>acetyl-CoA(in) = acetyl-CoA(out)</text>
        <dbReference type="Rhea" id="RHEA:75039"/>
        <dbReference type="ChEBI" id="CHEBI:57288"/>
    </reaction>
    <physiologicalReaction direction="left-to-right" evidence="6 8">
        <dbReference type="Rhea" id="RHEA:75040"/>
    </physiologicalReaction>
</comment>
<comment type="subunit">
    <text evidence="8">Homodimerizes.</text>
</comment>
<comment type="interaction">
    <interactant intactId="EBI-11135403">
        <id>O00400</id>
    </interactant>
    <interactant intactId="EBI-349854">
        <id>P13569</id>
        <label>CFTR</label>
    </interactant>
    <organismsDiffer>false</organismsDiffer>
    <experiments>6</experiments>
</comment>
<comment type="subcellular location">
    <subcellularLocation>
        <location evidence="6 8">Endoplasmic reticulum membrane</location>
        <topology evidence="2">Multi-pass membrane protein</topology>
    </subcellularLocation>
</comment>
<comment type="tissue specificity">
    <text evidence="10">Ubiquitous. Detected in heart, brain, placenta, lung, liver, skeletal muscle, kidney and pancreas. With strongest signals in pancreas.</text>
</comment>
<comment type="induction">
    <text evidence="6">Expression is induced in presence of ceramide.</text>
</comment>
<comment type="disease" evidence="5 8 9">
    <disease id="DI-01042">
        <name>Spastic paraplegia 42, autosomal dominant</name>
        <acronym>SPG42</acronym>
        <description>A form of spastic paraplegia, a neurodegenerative disorder characterized by a slow, gradual, progressive weakness and spasticity of the lower limbs. Rate of progression and the severity of symptoms are quite variable. Initial symptoms may include difficulty with balance, weakness and stiffness in the legs, muscle spasms, and dragging the toes when walking. In some forms of the disorder, bladder symptoms (such as incontinence) may appear, or the weakness and stiffness may spread to other parts of the body.</description>
        <dbReference type="MIM" id="612539"/>
    </disease>
    <text>The disease is caused by variants affecting the gene represented in this entry.</text>
</comment>
<comment type="disease" evidence="7">
    <disease id="DI-03388">
        <name>Huppke-Brendel syndrome</name>
        <acronym>HPBDS</acronym>
        <description>An autosomal recessive disorder characterized by congenital cataracts, severe psychomotor retardation, and hearing loss associated with decreased serum ceruloplasmin and copper. Brain MRI shows cerebral and cerebellar atrophy and hypomyelination.</description>
        <dbReference type="MIM" id="614482"/>
    </disease>
    <text>The disease is caused by variants affecting the gene represented in this entry.</text>
</comment>
<comment type="similarity">
    <text evidence="12">Belongs to the SLC33A transporter family.</text>
</comment>
<comment type="online information" name="Mendelian genes solute carrier family 33 (acetyl-CoA transporter), member 1 (SLC33A1)">
    <link uri="https://databases.lovd.nl/shared/genes/SLC33A1"/>
    <text>Leiden Open Variation Database (LOVD)</text>
</comment>
<protein>
    <recommendedName>
        <fullName evidence="12">Acetyl-coenzyme A transporter 1</fullName>
        <shortName evidence="11">AT-1</shortName>
        <shortName>Acetyl-CoA transporter 1</shortName>
    </recommendedName>
    <alternativeName>
        <fullName>Solute carrier family 33 member 1</fullName>
    </alternativeName>
</protein>
<accession>O00400</accession>
<accession>B2R5Q2</accession>
<accession>D3DNK4</accession>
<dbReference type="EMBL" id="D88152">
    <property type="protein sequence ID" value="BAA20072.1"/>
    <property type="molecule type" value="mRNA"/>
</dbReference>
<dbReference type="EMBL" id="AK312268">
    <property type="protein sequence ID" value="BAG35199.1"/>
    <property type="molecule type" value="mRNA"/>
</dbReference>
<dbReference type="EMBL" id="CH471052">
    <property type="protein sequence ID" value="EAW78743.1"/>
    <property type="molecule type" value="Genomic_DNA"/>
</dbReference>
<dbReference type="EMBL" id="CH471052">
    <property type="protein sequence ID" value="EAW78744.1"/>
    <property type="molecule type" value="Genomic_DNA"/>
</dbReference>
<dbReference type="EMBL" id="BC014416">
    <property type="protein sequence ID" value="AAH14416.1"/>
    <property type="molecule type" value="mRNA"/>
</dbReference>
<dbReference type="CCDS" id="CCDS3173.1"/>
<dbReference type="RefSeq" id="NP_001177921.1">
    <property type="nucleotide sequence ID" value="NM_001190992.2"/>
</dbReference>
<dbReference type="RefSeq" id="NP_004724.1">
    <property type="nucleotide sequence ID" value="NM_004733.4"/>
</dbReference>
<dbReference type="BioGRID" id="114632">
    <property type="interactions" value="206"/>
</dbReference>
<dbReference type="FunCoup" id="O00400">
    <property type="interactions" value="1206"/>
</dbReference>
<dbReference type="IntAct" id="O00400">
    <property type="interactions" value="87"/>
</dbReference>
<dbReference type="MINT" id="O00400"/>
<dbReference type="STRING" id="9606.ENSP00000496241"/>
<dbReference type="BindingDB" id="O00400"/>
<dbReference type="ChEMBL" id="CHEMBL3638338"/>
<dbReference type="TCDB" id="2.A.1.25.1">
    <property type="family name" value="the major facilitator superfamily (mfs)"/>
</dbReference>
<dbReference type="GlyConnect" id="2835">
    <property type="glycosylation" value="1 N-Linked glycan (1 site)"/>
</dbReference>
<dbReference type="GlyCosmos" id="O00400">
    <property type="glycosylation" value="1 site, No reported glycans"/>
</dbReference>
<dbReference type="GlyGen" id="O00400">
    <property type="glycosylation" value="2 sites, 1 N-linked glycan (1 site)"/>
</dbReference>
<dbReference type="iPTMnet" id="O00400"/>
<dbReference type="PhosphoSitePlus" id="O00400"/>
<dbReference type="SwissPalm" id="O00400"/>
<dbReference type="BioMuta" id="SLC33A1"/>
<dbReference type="jPOST" id="O00400"/>
<dbReference type="MassIVE" id="O00400"/>
<dbReference type="PaxDb" id="9606-ENSP00000376587"/>
<dbReference type="PeptideAtlas" id="O00400"/>
<dbReference type="ProteomicsDB" id="47866"/>
<dbReference type="Pumba" id="O00400"/>
<dbReference type="Antibodypedia" id="33630">
    <property type="antibodies" value="166 antibodies from 24 providers"/>
</dbReference>
<dbReference type="DNASU" id="9197"/>
<dbReference type="Ensembl" id="ENST00000359479.7">
    <property type="protein sequence ID" value="ENSP00000352456.3"/>
    <property type="gene ID" value="ENSG00000169359.16"/>
</dbReference>
<dbReference type="Ensembl" id="ENST00000643144.2">
    <property type="protein sequence ID" value="ENSP00000496241.1"/>
    <property type="gene ID" value="ENSG00000169359.16"/>
</dbReference>
<dbReference type="GeneID" id="9197"/>
<dbReference type="KEGG" id="hsa:9197"/>
<dbReference type="MANE-Select" id="ENST00000643144.2">
    <property type="protein sequence ID" value="ENSP00000496241.1"/>
    <property type="RefSeq nucleotide sequence ID" value="NM_004733.4"/>
    <property type="RefSeq protein sequence ID" value="NP_004724.1"/>
</dbReference>
<dbReference type="UCSC" id="uc003fan.6">
    <property type="organism name" value="human"/>
</dbReference>
<dbReference type="AGR" id="HGNC:95"/>
<dbReference type="CTD" id="9197"/>
<dbReference type="DisGeNET" id="9197"/>
<dbReference type="GeneCards" id="SLC33A1"/>
<dbReference type="GeneReviews" id="SLC33A1"/>
<dbReference type="HGNC" id="HGNC:95">
    <property type="gene designation" value="SLC33A1"/>
</dbReference>
<dbReference type="HPA" id="ENSG00000169359">
    <property type="expression patterns" value="Low tissue specificity"/>
</dbReference>
<dbReference type="MalaCards" id="SLC33A1"/>
<dbReference type="MIM" id="603690">
    <property type="type" value="gene"/>
</dbReference>
<dbReference type="MIM" id="612539">
    <property type="type" value="phenotype"/>
</dbReference>
<dbReference type="MIM" id="614482">
    <property type="type" value="phenotype"/>
</dbReference>
<dbReference type="neXtProt" id="NX_O00400"/>
<dbReference type="OpenTargets" id="ENSG00000169359"/>
<dbReference type="Orphanet" id="171863">
    <property type="disease" value="Autosomal dominant spastic paraplegia type 42"/>
</dbReference>
<dbReference type="Orphanet" id="300313">
    <property type="disease" value="Congenital cataract-hearing loss-severe developmental delay syndrome"/>
</dbReference>
<dbReference type="PharmGKB" id="PA24432"/>
<dbReference type="VEuPathDB" id="HostDB:ENSG00000169359"/>
<dbReference type="eggNOG" id="KOG3574">
    <property type="taxonomic scope" value="Eukaryota"/>
</dbReference>
<dbReference type="GeneTree" id="ENSGT00940000154019"/>
<dbReference type="HOGENOM" id="CLU_020502_1_0_1"/>
<dbReference type="InParanoid" id="O00400"/>
<dbReference type="OMA" id="RRKSWIM"/>
<dbReference type="OrthoDB" id="6415790at2759"/>
<dbReference type="PAN-GO" id="O00400">
    <property type="GO annotations" value="1 GO annotation based on evolutionary models"/>
</dbReference>
<dbReference type="PhylomeDB" id="O00400"/>
<dbReference type="TreeFam" id="TF300008"/>
<dbReference type="PathwayCommons" id="O00400"/>
<dbReference type="Reactome" id="R-HSA-425397">
    <property type="pathway name" value="Transport of vitamins, nucleosides, and related molecules"/>
</dbReference>
<dbReference type="Reactome" id="R-HSA-5619061">
    <property type="pathway name" value="Defective SLC33A1 causes spastic paraplegia 42 (SPG42)"/>
</dbReference>
<dbReference type="SignaLink" id="O00400"/>
<dbReference type="BioGRID-ORCS" id="9197">
    <property type="hits" value="100 hits in 1167 CRISPR screens"/>
</dbReference>
<dbReference type="ChiTaRS" id="SLC33A1">
    <property type="organism name" value="human"/>
</dbReference>
<dbReference type="GenomeRNAi" id="9197"/>
<dbReference type="Pharos" id="O00400">
    <property type="development level" value="Tchem"/>
</dbReference>
<dbReference type="PRO" id="PR:O00400"/>
<dbReference type="Proteomes" id="UP000005640">
    <property type="component" value="Chromosome 3"/>
</dbReference>
<dbReference type="RNAct" id="O00400">
    <property type="molecule type" value="protein"/>
</dbReference>
<dbReference type="Bgee" id="ENSG00000169359">
    <property type="expression patterns" value="Expressed in corpus epididymis and 198 other cell types or tissues"/>
</dbReference>
<dbReference type="ExpressionAtlas" id="O00400">
    <property type="expression patterns" value="baseline and differential"/>
</dbReference>
<dbReference type="GO" id="GO:0005789">
    <property type="term" value="C:endoplasmic reticulum membrane"/>
    <property type="evidence" value="ECO:0000314"/>
    <property type="project" value="UniProtKB"/>
</dbReference>
<dbReference type="GO" id="GO:0000139">
    <property type="term" value="C:Golgi membrane"/>
    <property type="evidence" value="ECO:0000304"/>
    <property type="project" value="Reactome"/>
</dbReference>
<dbReference type="GO" id="GO:0016020">
    <property type="term" value="C:membrane"/>
    <property type="evidence" value="ECO:0007005"/>
    <property type="project" value="UniProtKB"/>
</dbReference>
<dbReference type="GO" id="GO:0005886">
    <property type="term" value="C:plasma membrane"/>
    <property type="evidence" value="ECO:0000304"/>
    <property type="project" value="ProtInc"/>
</dbReference>
<dbReference type="GO" id="GO:0008521">
    <property type="term" value="F:acetyl-CoA transmembrane transporter activity"/>
    <property type="evidence" value="ECO:0000314"/>
    <property type="project" value="UniProtKB"/>
</dbReference>
<dbReference type="GO" id="GO:0042803">
    <property type="term" value="F:protein homodimerization activity"/>
    <property type="evidence" value="ECO:0000314"/>
    <property type="project" value="UniProtKB"/>
</dbReference>
<dbReference type="GO" id="GO:0035348">
    <property type="term" value="P:acetyl-CoA transmembrane transport"/>
    <property type="evidence" value="ECO:0000314"/>
    <property type="project" value="UniProtKB"/>
</dbReference>
<dbReference type="GO" id="GO:0055085">
    <property type="term" value="P:transmembrane transport"/>
    <property type="evidence" value="ECO:0000304"/>
    <property type="project" value="Reactome"/>
</dbReference>
<dbReference type="FunFam" id="1.20.1250.20:FF:000287">
    <property type="entry name" value="acetyl-coenzyme A transporter 1 isoform X1"/>
    <property type="match status" value="1"/>
</dbReference>
<dbReference type="Gene3D" id="1.20.1250.20">
    <property type="entry name" value="MFS general substrate transporter like domains"/>
    <property type="match status" value="1"/>
</dbReference>
<dbReference type="InterPro" id="IPR024371">
    <property type="entry name" value="AcetylCoA_trans_1-like"/>
</dbReference>
<dbReference type="InterPro" id="IPR004752">
    <property type="entry name" value="AmpG_permease/AT-1"/>
</dbReference>
<dbReference type="InterPro" id="IPR036259">
    <property type="entry name" value="MFS_trans_sf"/>
</dbReference>
<dbReference type="PANTHER" id="PTHR12778:SF9">
    <property type="entry name" value="ACETYL-COENZYME A TRANSPORTER 1"/>
    <property type="match status" value="1"/>
</dbReference>
<dbReference type="PANTHER" id="PTHR12778">
    <property type="entry name" value="SOLUTE CARRIER FAMILY 33 ACETYL-COA TRANSPORTER -RELATED"/>
    <property type="match status" value="1"/>
</dbReference>
<dbReference type="Pfam" id="PF13000">
    <property type="entry name" value="Acatn"/>
    <property type="match status" value="2"/>
</dbReference>
<dbReference type="SUPFAM" id="SSF103473">
    <property type="entry name" value="MFS general substrate transporter"/>
    <property type="match status" value="1"/>
</dbReference>
<name>ACATN_HUMAN</name>
<keyword id="KW-0898">Cataract</keyword>
<keyword id="KW-0209">Deafness</keyword>
<keyword id="KW-0225">Disease variant</keyword>
<keyword id="KW-0256">Endoplasmic reticulum</keyword>
<keyword id="KW-0325">Glycoprotein</keyword>
<keyword id="KW-0890">Hereditary spastic paraplegia</keyword>
<keyword id="KW-0472">Membrane</keyword>
<keyword id="KW-0523">Neurodegeneration</keyword>
<keyword id="KW-0597">Phosphoprotein</keyword>
<keyword id="KW-1267">Proteomics identification</keyword>
<keyword id="KW-1185">Reference proteome</keyword>
<keyword id="KW-0812">Transmembrane</keyword>
<keyword id="KW-1133">Transmembrane helix</keyword>
<keyword id="KW-0813">Transport</keyword>
<feature type="chain" id="PRO_0000076165" description="Acetyl-coenzyme A transporter 1">
    <location>
        <begin position="1"/>
        <end position="549"/>
    </location>
</feature>
<feature type="topological domain" description="Cytoplasmic" evidence="2">
    <location>
        <begin position="1"/>
        <end position="74"/>
    </location>
</feature>
<feature type="transmembrane region" description="Helical" evidence="2">
    <location>
        <begin position="75"/>
        <end position="95"/>
    </location>
</feature>
<feature type="topological domain" description="Extracellular" evidence="2">
    <location>
        <begin position="96"/>
        <end position="113"/>
    </location>
</feature>
<feature type="transmembrane region" description="Helical" evidence="2">
    <location>
        <begin position="114"/>
        <end position="134"/>
    </location>
</feature>
<feature type="topological domain" description="Cytoplasmic" evidence="2">
    <location>
        <begin position="135"/>
        <end position="141"/>
    </location>
</feature>
<feature type="transmembrane region" description="Helical" evidence="2">
    <location>
        <begin position="142"/>
        <end position="162"/>
    </location>
</feature>
<feature type="topological domain" description="Extracellular" evidence="2">
    <location>
        <begin position="163"/>
        <end position="175"/>
    </location>
</feature>
<feature type="transmembrane region" description="Helical" evidence="2">
    <location>
        <begin position="176"/>
        <end position="196"/>
    </location>
</feature>
<feature type="topological domain" description="Cytoplasmic" evidence="2">
    <location>
        <begin position="197"/>
        <end position="217"/>
    </location>
</feature>
<feature type="transmembrane region" description="Helical" evidence="2">
    <location>
        <begin position="218"/>
        <end position="238"/>
    </location>
</feature>
<feature type="topological domain" description="Extracellular" evidence="2">
    <location>
        <begin position="239"/>
        <end position="256"/>
    </location>
</feature>
<feature type="transmembrane region" description="Helical" evidence="2">
    <location>
        <begin position="257"/>
        <end position="277"/>
    </location>
</feature>
<feature type="topological domain" description="Cytoplasmic" evidence="2">
    <location>
        <begin position="278"/>
        <end position="299"/>
    </location>
</feature>
<feature type="transmembrane region" description="Helical" evidence="2">
    <location>
        <begin position="300"/>
        <end position="320"/>
    </location>
</feature>
<feature type="topological domain" description="Extracellular" evidence="2">
    <location>
        <begin position="321"/>
        <end position="343"/>
    </location>
</feature>
<feature type="transmembrane region" description="Helical" evidence="2">
    <location>
        <begin position="344"/>
        <end position="364"/>
    </location>
</feature>
<feature type="topological domain" description="Cytoplasmic" evidence="2">
    <location>
        <begin position="365"/>
        <end position="378"/>
    </location>
</feature>
<feature type="transmembrane region" description="Helical" evidence="2">
    <location>
        <begin position="379"/>
        <end position="398"/>
    </location>
</feature>
<feature type="topological domain" description="Extracellular" evidence="2">
    <location>
        <begin position="399"/>
        <end position="404"/>
    </location>
</feature>
<feature type="transmembrane region" description="Helical" evidence="2">
    <location>
        <begin position="405"/>
        <end position="425"/>
    </location>
</feature>
<feature type="topological domain" description="Cytoplasmic" evidence="2">
    <location>
        <begin position="426"/>
        <end position="508"/>
    </location>
</feature>
<feature type="transmembrane region" description="Helical" evidence="2">
    <location>
        <begin position="509"/>
        <end position="529"/>
    </location>
</feature>
<feature type="topological domain" description="Extracellular" evidence="2">
    <location>
        <begin position="530"/>
        <end position="549"/>
    </location>
</feature>
<feature type="region of interest" description="Disordered" evidence="3">
    <location>
        <begin position="1"/>
        <end position="46"/>
    </location>
</feature>
<feature type="compositionally biased region" description="Basic and acidic residues" evidence="3">
    <location>
        <begin position="1"/>
        <end position="12"/>
    </location>
</feature>
<feature type="compositionally biased region" description="Basic and acidic residues" evidence="3">
    <location>
        <begin position="36"/>
        <end position="46"/>
    </location>
</feature>
<feature type="modified residue" description="Phosphoserine" evidence="14">
    <location>
        <position position="22"/>
    </location>
</feature>
<feature type="modified residue" description="Phosphoserine" evidence="1">
    <location>
        <position position="42"/>
    </location>
</feature>
<feature type="glycosylation site" description="N-linked (GlcNAc...) asparagine" evidence="2">
    <location>
        <position position="103"/>
    </location>
</feature>
<feature type="sequence variant" id="VAR_067915" description="In HPBDS; the mutant protein is present at normal levels in patient fibroblasts; the mutant protein fails to localize normally to the Golgi apparatus and instead shows punctate staining in the cytoplasm; dbSNP:rs281875283." evidence="7">
    <original>A</original>
    <variation>P</variation>
    <location>
        <position position="110"/>
    </location>
</feature>
<feature type="sequence variant" id="VAR_054850" description="In SPG42; significant increase in the amount of nuclear phosphorylated SMAD1-SMAD5-SMAD8 protein complex; marked increase of the BMPR1A protein level; no change for BMPR2 protein level; decrease of BMPR1A degradation; Loss of homodimerization in the endoplasmic membrane; loss of acetyl-CoA transport activity; dbSNP:rs121909484." evidence="5 8 9">
    <original>S</original>
    <variation>R</variation>
    <location>
        <position position="113"/>
    </location>
</feature>
<feature type="sequence variant" id="VAR_050631" description="In dbSNP:rs3804769.">
    <original>D</original>
    <variation>G</variation>
    <location>
        <position position="171"/>
    </location>
</feature>
<feature type="sequence variant" id="VAR_035776" description="In a colorectal cancer sample; somatic mutation." evidence="4">
    <original>V</original>
    <variation>A</variation>
    <location>
        <position position="400"/>
    </location>
</feature>
<reference key="1">
    <citation type="journal article" date="1997" name="Proc. Natl. Acad. Sci. U.S.A.">
        <title>Expression cloning and characterization of a cDNA encoding a novel membrane protein required for the formation of O-acetylated gangliosides: a putative acetyl CoA transporter.</title>
        <authorList>
            <person name="Kanamori A."/>
            <person name="Nakayama J."/>
            <person name="Fukuda M.N."/>
            <person name="Stallcup W.B."/>
            <person name="Sasaki K."/>
            <person name="Fukuda M."/>
            <person name="Hirabayashi Y."/>
        </authorList>
    </citation>
    <scope>NUCLEOTIDE SEQUENCE [MRNA]</scope>
    <scope>FUNCTION</scope>
    <scope>TISSUE SPECIFICITY</scope>
    <scope>SUBCELLULAR LOCATION</scope>
    <source>
        <tissue>Melanoma</tissue>
    </source>
</reference>
<reference key="2">
    <citation type="journal article" date="2004" name="Nat. Genet.">
        <title>Complete sequencing and characterization of 21,243 full-length human cDNAs.</title>
        <authorList>
            <person name="Ota T."/>
            <person name="Suzuki Y."/>
            <person name="Nishikawa T."/>
            <person name="Otsuki T."/>
            <person name="Sugiyama T."/>
            <person name="Irie R."/>
            <person name="Wakamatsu A."/>
            <person name="Hayashi K."/>
            <person name="Sato H."/>
            <person name="Nagai K."/>
            <person name="Kimura K."/>
            <person name="Makita H."/>
            <person name="Sekine M."/>
            <person name="Obayashi M."/>
            <person name="Nishi T."/>
            <person name="Shibahara T."/>
            <person name="Tanaka T."/>
            <person name="Ishii S."/>
            <person name="Yamamoto J."/>
            <person name="Saito K."/>
            <person name="Kawai Y."/>
            <person name="Isono Y."/>
            <person name="Nakamura Y."/>
            <person name="Nagahari K."/>
            <person name="Murakami K."/>
            <person name="Yasuda T."/>
            <person name="Iwayanagi T."/>
            <person name="Wagatsuma M."/>
            <person name="Shiratori A."/>
            <person name="Sudo H."/>
            <person name="Hosoiri T."/>
            <person name="Kaku Y."/>
            <person name="Kodaira H."/>
            <person name="Kondo H."/>
            <person name="Sugawara M."/>
            <person name="Takahashi M."/>
            <person name="Kanda K."/>
            <person name="Yokoi T."/>
            <person name="Furuya T."/>
            <person name="Kikkawa E."/>
            <person name="Omura Y."/>
            <person name="Abe K."/>
            <person name="Kamihara K."/>
            <person name="Katsuta N."/>
            <person name="Sato K."/>
            <person name="Tanikawa M."/>
            <person name="Yamazaki M."/>
            <person name="Ninomiya K."/>
            <person name="Ishibashi T."/>
            <person name="Yamashita H."/>
            <person name="Murakawa K."/>
            <person name="Fujimori K."/>
            <person name="Tanai H."/>
            <person name="Kimata M."/>
            <person name="Watanabe M."/>
            <person name="Hiraoka S."/>
            <person name="Chiba Y."/>
            <person name="Ishida S."/>
            <person name="Ono Y."/>
            <person name="Takiguchi S."/>
            <person name="Watanabe S."/>
            <person name="Yosida M."/>
            <person name="Hotuta T."/>
            <person name="Kusano J."/>
            <person name="Kanehori K."/>
            <person name="Takahashi-Fujii A."/>
            <person name="Hara H."/>
            <person name="Tanase T.-O."/>
            <person name="Nomura Y."/>
            <person name="Togiya S."/>
            <person name="Komai F."/>
            <person name="Hara R."/>
            <person name="Takeuchi K."/>
            <person name="Arita M."/>
            <person name="Imose N."/>
            <person name="Musashino K."/>
            <person name="Yuuki H."/>
            <person name="Oshima A."/>
            <person name="Sasaki N."/>
            <person name="Aotsuka S."/>
            <person name="Yoshikawa Y."/>
            <person name="Matsunawa H."/>
            <person name="Ichihara T."/>
            <person name="Shiohata N."/>
            <person name="Sano S."/>
            <person name="Moriya S."/>
            <person name="Momiyama H."/>
            <person name="Satoh N."/>
            <person name="Takami S."/>
            <person name="Terashima Y."/>
            <person name="Suzuki O."/>
            <person name="Nakagawa S."/>
            <person name="Senoh A."/>
            <person name="Mizoguchi H."/>
            <person name="Goto Y."/>
            <person name="Shimizu F."/>
            <person name="Wakebe H."/>
            <person name="Hishigaki H."/>
            <person name="Watanabe T."/>
            <person name="Sugiyama A."/>
            <person name="Takemoto M."/>
            <person name="Kawakami B."/>
            <person name="Yamazaki M."/>
            <person name="Watanabe K."/>
            <person name="Kumagai A."/>
            <person name="Itakura S."/>
            <person name="Fukuzumi Y."/>
            <person name="Fujimori Y."/>
            <person name="Komiyama M."/>
            <person name="Tashiro H."/>
            <person name="Tanigami A."/>
            <person name="Fujiwara T."/>
            <person name="Ono T."/>
            <person name="Yamada K."/>
            <person name="Fujii Y."/>
            <person name="Ozaki K."/>
            <person name="Hirao M."/>
            <person name="Ohmori Y."/>
            <person name="Kawabata A."/>
            <person name="Hikiji T."/>
            <person name="Kobatake N."/>
            <person name="Inagaki H."/>
            <person name="Ikema Y."/>
            <person name="Okamoto S."/>
            <person name="Okitani R."/>
            <person name="Kawakami T."/>
            <person name="Noguchi S."/>
            <person name="Itoh T."/>
            <person name="Shigeta K."/>
            <person name="Senba T."/>
            <person name="Matsumura K."/>
            <person name="Nakajima Y."/>
            <person name="Mizuno T."/>
            <person name="Morinaga M."/>
            <person name="Sasaki M."/>
            <person name="Togashi T."/>
            <person name="Oyama M."/>
            <person name="Hata H."/>
            <person name="Watanabe M."/>
            <person name="Komatsu T."/>
            <person name="Mizushima-Sugano J."/>
            <person name="Satoh T."/>
            <person name="Shirai Y."/>
            <person name="Takahashi Y."/>
            <person name="Nakagawa K."/>
            <person name="Okumura K."/>
            <person name="Nagase T."/>
            <person name="Nomura N."/>
            <person name="Kikuchi H."/>
            <person name="Masuho Y."/>
            <person name="Yamashita R."/>
            <person name="Nakai K."/>
            <person name="Yada T."/>
            <person name="Nakamura Y."/>
            <person name="Ohara O."/>
            <person name="Isogai T."/>
            <person name="Sugano S."/>
        </authorList>
    </citation>
    <scope>NUCLEOTIDE SEQUENCE [LARGE SCALE MRNA]</scope>
</reference>
<reference key="3">
    <citation type="submission" date="2005-09" db="EMBL/GenBank/DDBJ databases">
        <authorList>
            <person name="Mural R.J."/>
            <person name="Istrail S."/>
            <person name="Sutton G.G."/>
            <person name="Florea L."/>
            <person name="Halpern A.L."/>
            <person name="Mobarry C.M."/>
            <person name="Lippert R."/>
            <person name="Walenz B."/>
            <person name="Shatkay H."/>
            <person name="Dew I."/>
            <person name="Miller J.R."/>
            <person name="Flanigan M.J."/>
            <person name="Edwards N.J."/>
            <person name="Bolanos R."/>
            <person name="Fasulo D."/>
            <person name="Halldorsson B.V."/>
            <person name="Hannenhalli S."/>
            <person name="Turner R."/>
            <person name="Yooseph S."/>
            <person name="Lu F."/>
            <person name="Nusskern D.R."/>
            <person name="Shue B.C."/>
            <person name="Zheng X.H."/>
            <person name="Zhong F."/>
            <person name="Delcher A.L."/>
            <person name="Huson D.H."/>
            <person name="Kravitz S.A."/>
            <person name="Mouchard L."/>
            <person name="Reinert K."/>
            <person name="Remington K.A."/>
            <person name="Clark A.G."/>
            <person name="Waterman M.S."/>
            <person name="Eichler E.E."/>
            <person name="Adams M.D."/>
            <person name="Hunkapiller M.W."/>
            <person name="Myers E.W."/>
            <person name="Venter J.C."/>
        </authorList>
    </citation>
    <scope>NUCLEOTIDE SEQUENCE [LARGE SCALE GENOMIC DNA]</scope>
</reference>
<reference key="4">
    <citation type="journal article" date="2004" name="Genome Res.">
        <title>The status, quality, and expansion of the NIH full-length cDNA project: the Mammalian Gene Collection (MGC).</title>
        <authorList>
            <consortium name="The MGC Project Team"/>
        </authorList>
    </citation>
    <scope>NUCLEOTIDE SEQUENCE [LARGE SCALE MRNA]</scope>
    <source>
        <tissue>Kidney</tissue>
    </source>
</reference>
<reference key="5">
    <citation type="journal article" date="2010" name="J. Cell Sci.">
        <title>AT-1 is the ER membrane acetyl-CoA transporter and is essential for cell viability.</title>
        <authorList>
            <person name="Jonas M.C."/>
            <person name="Pehar M."/>
            <person name="Puglielli L."/>
        </authorList>
    </citation>
    <scope>FUNCTION</scope>
    <scope>SUBCELLULAR LOCATION</scope>
    <scope>TRANSPORTER ACTIVITY</scope>
    <scope>INDUCTION BY CERAMIDE</scope>
</reference>
<reference key="6">
    <citation type="journal article" date="2013" name="J. Proteome Res.">
        <title>Toward a comprehensive characterization of a human cancer cell phosphoproteome.</title>
        <authorList>
            <person name="Zhou H."/>
            <person name="Di Palma S."/>
            <person name="Preisinger C."/>
            <person name="Peng M."/>
            <person name="Polat A.N."/>
            <person name="Heck A.J."/>
            <person name="Mohammed S."/>
        </authorList>
    </citation>
    <scope>PHOSPHORYLATION [LARGE SCALE ANALYSIS] AT SER-22</scope>
    <scope>IDENTIFICATION BY MASS SPECTROMETRY [LARGE SCALE ANALYSIS]</scope>
    <source>
        <tissue>Erythroleukemia</tissue>
    </source>
</reference>
<reference key="7">
    <citation type="journal article" date="2015" name="Hum. Mutat.">
        <title>Identification and Functional Analysis of a SLC33A1: c.339T&gt;G (p.Ser113Arg) Variant in the Original SPG42 Family.</title>
        <authorList>
            <person name="Mao F."/>
            <person name="Li Z."/>
            <person name="Zhao B."/>
            <person name="Lin P."/>
            <person name="Liu P."/>
            <person name="Zhai M."/>
            <person name="Liu Q."/>
            <person name="Shao C."/>
            <person name="Sun W."/>
            <person name="Gong Y."/>
        </authorList>
    </citation>
    <scope>FUNCTION</scope>
    <scope>VARIANT SPG42 ARG-113</scope>
    <scope>CHARACTERIZATION OF VARIANT SPG42 ARG-113</scope>
</reference>
<reference key="8">
    <citation type="journal article" date="2015" name="Proteomics">
        <title>N-terminome analysis of the human mitochondrial proteome.</title>
        <authorList>
            <person name="Vaca Jacome A.S."/>
            <person name="Rabilloud T."/>
            <person name="Schaeffer-Reiss C."/>
            <person name="Rompais M."/>
            <person name="Ayoub D."/>
            <person name="Lane L."/>
            <person name="Bairoch A."/>
            <person name="Van Dorsselaer A."/>
            <person name="Carapito C."/>
        </authorList>
    </citation>
    <scope>IDENTIFICATION BY MASS SPECTROMETRY [LARGE SCALE ANALYSIS]</scope>
</reference>
<reference key="9">
    <citation type="journal article" date="2006" name="Science">
        <title>The consensus coding sequences of human breast and colorectal cancers.</title>
        <authorList>
            <person name="Sjoeblom T."/>
            <person name="Jones S."/>
            <person name="Wood L.D."/>
            <person name="Parsons D.W."/>
            <person name="Lin J."/>
            <person name="Barber T.D."/>
            <person name="Mandelker D."/>
            <person name="Leary R.J."/>
            <person name="Ptak J."/>
            <person name="Silliman N."/>
            <person name="Szabo S."/>
            <person name="Buckhaults P."/>
            <person name="Farrell C."/>
            <person name="Meeh P."/>
            <person name="Markowitz S.D."/>
            <person name="Willis J."/>
            <person name="Dawson D."/>
            <person name="Willson J.K.V."/>
            <person name="Gazdar A.F."/>
            <person name="Hartigan J."/>
            <person name="Wu L."/>
            <person name="Liu C."/>
            <person name="Parmigiani G."/>
            <person name="Park B.H."/>
            <person name="Bachman K.E."/>
            <person name="Papadopoulos N."/>
            <person name="Vogelstein B."/>
            <person name="Kinzler K.W."/>
            <person name="Velculescu V.E."/>
        </authorList>
    </citation>
    <scope>VARIANT [LARGE SCALE ANALYSIS] ALA-400</scope>
</reference>
<reference key="10">
    <citation type="journal article" date="2008" name="Am. J. Hum. Genet.">
        <title>A missense mutation in SLC33A1, which encodes the acetyl-CoA transporter, causes autosomal-dominant spastic paraplegia (SPG42).</title>
        <authorList>
            <person name="Lin P."/>
            <person name="Li J."/>
            <person name="Liu Q."/>
            <person name="Mao F."/>
            <person name="Li J."/>
            <person name="Qiu R."/>
            <person name="Hu H."/>
            <person name="Song Y."/>
            <person name="Yang Y."/>
            <person name="Gao G."/>
            <person name="Yan C."/>
            <person name="Yang W."/>
            <person name="Shao C."/>
            <person name="Gong Y."/>
        </authorList>
    </citation>
    <scope>VARIANT SPG42 ARG-113</scope>
</reference>
<reference key="11">
    <citation type="journal article" date="2012" name="Am. J. Hum. Genet.">
        <title>Mutations in SLC33A1 cause a lethal autosomal-recessive disorder with congenital cataracts, hearing loss, and low serum copper and ceruloplasmin.</title>
        <authorList>
            <person name="Huppke P."/>
            <person name="Brendel C."/>
            <person name="Kalscheuer V."/>
            <person name="Korenke G.C."/>
            <person name="Marquardt I."/>
            <person name="Freisinger P."/>
            <person name="Christodoulou J."/>
            <person name="Hillebrand M."/>
            <person name="Pitelet G."/>
            <person name="Wilson C."/>
            <person name="Gruber-Sedlmayr U."/>
            <person name="Ullmann R."/>
            <person name="Haas S."/>
            <person name="Elpeleg O."/>
            <person name="Nurnberg G."/>
            <person name="Nurnberg P."/>
            <person name="Dad S."/>
            <person name="Moller L.B."/>
            <person name="Kaler S.G."/>
            <person name="Gartner J."/>
        </authorList>
    </citation>
    <scope>VARIANT HPBDS PRO-110</scope>
    <scope>CHARACTERIZATION OF VARIANT HPBDS PRO-110</scope>
</reference>
<reference key="12">
    <citation type="journal article" date="2012" name="Am. J. Hum. Genet.">
        <authorList>
            <person name="Huppke P."/>
            <person name="Brendel C."/>
            <person name="Kalscheuer V."/>
            <person name="Korenke G.C."/>
            <person name="Marquardt I."/>
            <person name="Freisinger P."/>
            <person name="Christodoulou J."/>
            <person name="Hillebrand M."/>
            <person name="Pitelet G."/>
            <person name="Wilson C."/>
            <person name="Gruber-Sedlmayr U."/>
            <person name="Ullmann R."/>
            <person name="Haas S."/>
            <person name="Elpeleg O."/>
            <person name="Nurnberg G."/>
            <person name="Nurnberg P."/>
            <person name="Dad S."/>
            <person name="Moller L.B."/>
            <person name="Kaler S.G."/>
            <person name="Gartner J."/>
        </authorList>
    </citation>
    <scope>ERRATUM OF PUBMED:22243965</scope>
</reference>
<reference key="13">
    <citation type="journal article" date="2014" name="J. Neurosci.">
        <title>Deficient import of acetyl-CoA into the ER lumen causes neurodegeneration and propensity to infections, inflammation, and cancer.</title>
        <authorList>
            <person name="Peng Y."/>
            <person name="Li M."/>
            <person name="Clarkson B.D."/>
            <person name="Pehar M."/>
            <person name="Lao P.J."/>
            <person name="Hillmer A.T."/>
            <person name="Barnhart T.E."/>
            <person name="Christian B.T."/>
            <person name="Mitchell H.A."/>
            <person name="Bendlin B.B."/>
            <person name="Sandor M."/>
            <person name="Puglielli L."/>
        </authorList>
    </citation>
    <scope>CHARACTERIZATION OF VARIANT SPG42 ARG-113</scope>
    <scope>FUNCTION</scope>
    <scope>TRANSPORTER ACTIVITY</scope>
    <scope>SUBUNIT</scope>
</reference>
<sequence length="549" mass="60909">MSPTISHKDSSRQRRPGNFSHSLDMKSGPLPPGGWDDSHLDSAGREGDREALLGDTGTGDFLKAPQSFRAELSSILLLLFLYVLQGIPLGLAGSIPLILQSKNVSYTDQAFFSFVFWPFSLKLLWAPLVDAVYVKNFGRRKSWLVPTQYILGLFMIYLSTQVDRLLGNTDDRTPDVIALTVAFFLFEFLAATQDIAVDGWALTMLSRENVGYASTCNSVGQTAGYFLGNVLFLALESADFCNKYLRFQPQPRGIVTLSDFLFFWGTVFLITTTLVALLKKENEVSVVKEETQGITDTYKLLFAIIKMPAVLTFCLLILTAKIGFSAADAVTGLKLVEEGVPKEHLALLAVPMVPLQIILPLIISKYTAGPQPLNTFYKAMPYRLLLGLEYALLVWWTPKVEHQGGFPIYYYIVVLLSYALHQVTVYSMYVSIMAFNAKVSDPLIGGTYMTLLNTVSNLGGNWPSTVALWLVDPLTVKECVGASNQNCRTPDAVELCKKLGGSCVTALDGYYVESIICVFIGFGWWFFLGPKFKKLQDEGSSSWKCKRNN</sequence>
<organism>
    <name type="scientific">Homo sapiens</name>
    <name type="common">Human</name>
    <dbReference type="NCBI Taxonomy" id="9606"/>
    <lineage>
        <taxon>Eukaryota</taxon>
        <taxon>Metazoa</taxon>
        <taxon>Chordata</taxon>
        <taxon>Craniata</taxon>
        <taxon>Vertebrata</taxon>
        <taxon>Euteleostomi</taxon>
        <taxon>Mammalia</taxon>
        <taxon>Eutheria</taxon>
        <taxon>Euarchontoglires</taxon>
        <taxon>Primates</taxon>
        <taxon>Haplorrhini</taxon>
        <taxon>Catarrhini</taxon>
        <taxon>Hominidae</taxon>
        <taxon>Homo</taxon>
    </lineage>
</organism>